<gene>
    <name evidence="1" type="primary">gcvH</name>
    <name type="ordered locus">VCM66_A0276</name>
</gene>
<comment type="function">
    <text evidence="1">The glycine cleavage system catalyzes the degradation of glycine. The H protein shuttles the methylamine group of glycine from the P protein to the T protein.</text>
</comment>
<comment type="cofactor">
    <cofactor evidence="1">
        <name>(R)-lipoate</name>
        <dbReference type="ChEBI" id="CHEBI:83088"/>
    </cofactor>
    <text evidence="1">Binds 1 lipoyl cofactor covalently.</text>
</comment>
<comment type="subunit">
    <text evidence="1">The glycine cleavage system is composed of four proteins: P, T, L and H.</text>
</comment>
<comment type="similarity">
    <text evidence="1">Belongs to the GcvH family.</text>
</comment>
<sequence>MDKTLKFTESHEWVRDNGDGTVTIGISEHAQEMLGDVVFVELPEIDAEIDAGDSFSLVESVKAASDIYAPVTGVVIEVNEDLQNSPELINEEPYDGGWIVKVKMSDPDELKDLKDAEEYLASIEED</sequence>
<accession>C3LUU8</accession>
<name>GCSH_VIBCM</name>
<dbReference type="EMBL" id="CP001234">
    <property type="protein sequence ID" value="ACP07253.1"/>
    <property type="molecule type" value="Genomic_DNA"/>
</dbReference>
<dbReference type="RefSeq" id="WP_000361811.1">
    <property type="nucleotide sequence ID" value="NC_012580.1"/>
</dbReference>
<dbReference type="SMR" id="C3LUU8"/>
<dbReference type="GeneID" id="89512304"/>
<dbReference type="KEGG" id="vcm:VCM66_A0276"/>
<dbReference type="HOGENOM" id="CLU_097408_2_0_6"/>
<dbReference type="Proteomes" id="UP000001217">
    <property type="component" value="Chromosome II"/>
</dbReference>
<dbReference type="GO" id="GO:0005829">
    <property type="term" value="C:cytosol"/>
    <property type="evidence" value="ECO:0007669"/>
    <property type="project" value="TreeGrafter"/>
</dbReference>
<dbReference type="GO" id="GO:0005960">
    <property type="term" value="C:glycine cleavage complex"/>
    <property type="evidence" value="ECO:0007669"/>
    <property type="project" value="InterPro"/>
</dbReference>
<dbReference type="GO" id="GO:0019464">
    <property type="term" value="P:glycine decarboxylation via glycine cleavage system"/>
    <property type="evidence" value="ECO:0007669"/>
    <property type="project" value="UniProtKB-UniRule"/>
</dbReference>
<dbReference type="CDD" id="cd06848">
    <property type="entry name" value="GCS_H"/>
    <property type="match status" value="1"/>
</dbReference>
<dbReference type="FunFam" id="2.40.50.100:FF:000011">
    <property type="entry name" value="Glycine cleavage system H protein"/>
    <property type="match status" value="1"/>
</dbReference>
<dbReference type="Gene3D" id="2.40.50.100">
    <property type="match status" value="1"/>
</dbReference>
<dbReference type="HAMAP" id="MF_00272">
    <property type="entry name" value="GcvH"/>
    <property type="match status" value="1"/>
</dbReference>
<dbReference type="InterPro" id="IPR003016">
    <property type="entry name" value="2-oxoA_DH_lipoyl-BS"/>
</dbReference>
<dbReference type="InterPro" id="IPR000089">
    <property type="entry name" value="Biotin_lipoyl"/>
</dbReference>
<dbReference type="InterPro" id="IPR002930">
    <property type="entry name" value="GCV_H"/>
</dbReference>
<dbReference type="InterPro" id="IPR033753">
    <property type="entry name" value="GCV_H/Fam206"/>
</dbReference>
<dbReference type="InterPro" id="IPR017453">
    <property type="entry name" value="GCV_H_sub"/>
</dbReference>
<dbReference type="InterPro" id="IPR011053">
    <property type="entry name" value="Single_hybrid_motif"/>
</dbReference>
<dbReference type="NCBIfam" id="TIGR00527">
    <property type="entry name" value="gcvH"/>
    <property type="match status" value="1"/>
</dbReference>
<dbReference type="NCBIfam" id="NF002270">
    <property type="entry name" value="PRK01202.1"/>
    <property type="match status" value="1"/>
</dbReference>
<dbReference type="PANTHER" id="PTHR11715">
    <property type="entry name" value="GLYCINE CLEAVAGE SYSTEM H PROTEIN"/>
    <property type="match status" value="1"/>
</dbReference>
<dbReference type="PANTHER" id="PTHR11715:SF3">
    <property type="entry name" value="GLYCINE CLEAVAGE SYSTEM H PROTEIN-RELATED"/>
    <property type="match status" value="1"/>
</dbReference>
<dbReference type="Pfam" id="PF01597">
    <property type="entry name" value="GCV_H"/>
    <property type="match status" value="1"/>
</dbReference>
<dbReference type="SUPFAM" id="SSF51230">
    <property type="entry name" value="Single hybrid motif"/>
    <property type="match status" value="1"/>
</dbReference>
<dbReference type="PROSITE" id="PS50968">
    <property type="entry name" value="BIOTINYL_LIPOYL"/>
    <property type="match status" value="1"/>
</dbReference>
<dbReference type="PROSITE" id="PS00189">
    <property type="entry name" value="LIPOYL"/>
    <property type="match status" value="1"/>
</dbReference>
<organism>
    <name type="scientific">Vibrio cholerae serotype O1 (strain M66-2)</name>
    <dbReference type="NCBI Taxonomy" id="579112"/>
    <lineage>
        <taxon>Bacteria</taxon>
        <taxon>Pseudomonadati</taxon>
        <taxon>Pseudomonadota</taxon>
        <taxon>Gammaproteobacteria</taxon>
        <taxon>Vibrionales</taxon>
        <taxon>Vibrionaceae</taxon>
        <taxon>Vibrio</taxon>
    </lineage>
</organism>
<proteinExistence type="inferred from homology"/>
<protein>
    <recommendedName>
        <fullName evidence="1">Glycine cleavage system H protein</fullName>
    </recommendedName>
</protein>
<evidence type="ECO:0000255" key="1">
    <source>
        <dbReference type="HAMAP-Rule" id="MF_00272"/>
    </source>
</evidence>
<evidence type="ECO:0000255" key="2">
    <source>
        <dbReference type="PROSITE-ProRule" id="PRU01066"/>
    </source>
</evidence>
<reference key="1">
    <citation type="journal article" date="2008" name="PLoS ONE">
        <title>A recalibrated molecular clock and independent origins for the cholera pandemic clones.</title>
        <authorList>
            <person name="Feng L."/>
            <person name="Reeves P.R."/>
            <person name="Lan R."/>
            <person name="Ren Y."/>
            <person name="Gao C."/>
            <person name="Zhou Z."/>
            <person name="Ren Y."/>
            <person name="Cheng J."/>
            <person name="Wang W."/>
            <person name="Wang J."/>
            <person name="Qian W."/>
            <person name="Li D."/>
            <person name="Wang L."/>
        </authorList>
    </citation>
    <scope>NUCLEOTIDE SEQUENCE [LARGE SCALE GENOMIC DNA]</scope>
    <source>
        <strain>M66-2</strain>
    </source>
</reference>
<feature type="chain" id="PRO_1000132433" description="Glycine cleavage system H protein">
    <location>
        <begin position="1"/>
        <end position="126"/>
    </location>
</feature>
<feature type="domain" description="Lipoyl-binding" evidence="2">
    <location>
        <begin position="21"/>
        <end position="103"/>
    </location>
</feature>
<feature type="modified residue" description="N6-lipoyllysine" evidence="1">
    <location>
        <position position="62"/>
    </location>
</feature>
<keyword id="KW-0450">Lipoyl</keyword>